<keyword id="KW-0963">Cytoplasm</keyword>
<keyword id="KW-0312">Gluconeogenesis</keyword>
<keyword id="KW-0324">Glycolysis</keyword>
<keyword id="KW-0413">Isomerase</keyword>
<evidence type="ECO:0000255" key="1">
    <source>
        <dbReference type="HAMAP-Rule" id="MF_00473"/>
    </source>
</evidence>
<proteinExistence type="inferred from homology"/>
<feature type="chain" id="PRO_1000125752" description="Glucose-6-phosphate isomerase">
    <location>
        <begin position="1"/>
        <end position="549"/>
    </location>
</feature>
<feature type="active site" description="Proton donor" evidence="1">
    <location>
        <position position="355"/>
    </location>
</feature>
<feature type="active site" evidence="1">
    <location>
        <position position="386"/>
    </location>
</feature>
<feature type="active site" evidence="1">
    <location>
        <position position="514"/>
    </location>
</feature>
<accession>B5QYI4</accession>
<dbReference type="EC" id="5.3.1.9" evidence="1"/>
<dbReference type="EMBL" id="AM933172">
    <property type="protein sequence ID" value="CAR35554.1"/>
    <property type="molecule type" value="Genomic_DNA"/>
</dbReference>
<dbReference type="RefSeq" id="WP_000790036.1">
    <property type="nucleotide sequence ID" value="NC_011294.1"/>
</dbReference>
<dbReference type="SMR" id="B5QYI4"/>
<dbReference type="KEGG" id="set:SEN3987"/>
<dbReference type="HOGENOM" id="CLU_017947_3_1_6"/>
<dbReference type="UniPathway" id="UPA00109">
    <property type="reaction ID" value="UER00181"/>
</dbReference>
<dbReference type="UniPathway" id="UPA00138"/>
<dbReference type="Proteomes" id="UP000000613">
    <property type="component" value="Chromosome"/>
</dbReference>
<dbReference type="GO" id="GO:0005829">
    <property type="term" value="C:cytosol"/>
    <property type="evidence" value="ECO:0007669"/>
    <property type="project" value="TreeGrafter"/>
</dbReference>
<dbReference type="GO" id="GO:0097367">
    <property type="term" value="F:carbohydrate derivative binding"/>
    <property type="evidence" value="ECO:0007669"/>
    <property type="project" value="InterPro"/>
</dbReference>
<dbReference type="GO" id="GO:0004347">
    <property type="term" value="F:glucose-6-phosphate isomerase activity"/>
    <property type="evidence" value="ECO:0007669"/>
    <property type="project" value="UniProtKB-UniRule"/>
</dbReference>
<dbReference type="GO" id="GO:0048029">
    <property type="term" value="F:monosaccharide binding"/>
    <property type="evidence" value="ECO:0007669"/>
    <property type="project" value="TreeGrafter"/>
</dbReference>
<dbReference type="GO" id="GO:0006094">
    <property type="term" value="P:gluconeogenesis"/>
    <property type="evidence" value="ECO:0007669"/>
    <property type="project" value="UniProtKB-UniRule"/>
</dbReference>
<dbReference type="GO" id="GO:0051156">
    <property type="term" value="P:glucose 6-phosphate metabolic process"/>
    <property type="evidence" value="ECO:0007669"/>
    <property type="project" value="TreeGrafter"/>
</dbReference>
<dbReference type="GO" id="GO:0006096">
    <property type="term" value="P:glycolytic process"/>
    <property type="evidence" value="ECO:0007669"/>
    <property type="project" value="UniProtKB-UniRule"/>
</dbReference>
<dbReference type="CDD" id="cd05015">
    <property type="entry name" value="SIS_PGI_1"/>
    <property type="match status" value="1"/>
</dbReference>
<dbReference type="CDD" id="cd05016">
    <property type="entry name" value="SIS_PGI_2"/>
    <property type="match status" value="1"/>
</dbReference>
<dbReference type="FunFam" id="1.10.1390.10:FF:000001">
    <property type="entry name" value="Glucose-6-phosphate isomerase"/>
    <property type="match status" value="1"/>
</dbReference>
<dbReference type="FunFam" id="3.40.50.10490:FF:000004">
    <property type="entry name" value="Glucose-6-phosphate isomerase"/>
    <property type="match status" value="1"/>
</dbReference>
<dbReference type="Gene3D" id="1.10.1390.10">
    <property type="match status" value="1"/>
</dbReference>
<dbReference type="Gene3D" id="3.40.50.10490">
    <property type="entry name" value="Glucose-6-phosphate isomerase like protein, domain 1"/>
    <property type="match status" value="2"/>
</dbReference>
<dbReference type="HAMAP" id="MF_00473">
    <property type="entry name" value="G6P_isomerase"/>
    <property type="match status" value="1"/>
</dbReference>
<dbReference type="InterPro" id="IPR001672">
    <property type="entry name" value="G6P_Isomerase"/>
</dbReference>
<dbReference type="InterPro" id="IPR023096">
    <property type="entry name" value="G6P_Isomerase_C"/>
</dbReference>
<dbReference type="InterPro" id="IPR018189">
    <property type="entry name" value="Phosphoglucose_isomerase_CS"/>
</dbReference>
<dbReference type="InterPro" id="IPR046348">
    <property type="entry name" value="SIS_dom_sf"/>
</dbReference>
<dbReference type="InterPro" id="IPR035476">
    <property type="entry name" value="SIS_PGI_1"/>
</dbReference>
<dbReference type="InterPro" id="IPR035482">
    <property type="entry name" value="SIS_PGI_2"/>
</dbReference>
<dbReference type="NCBIfam" id="NF001211">
    <property type="entry name" value="PRK00179.1"/>
    <property type="match status" value="1"/>
</dbReference>
<dbReference type="PANTHER" id="PTHR11469">
    <property type="entry name" value="GLUCOSE-6-PHOSPHATE ISOMERASE"/>
    <property type="match status" value="1"/>
</dbReference>
<dbReference type="PANTHER" id="PTHR11469:SF1">
    <property type="entry name" value="GLUCOSE-6-PHOSPHATE ISOMERASE"/>
    <property type="match status" value="1"/>
</dbReference>
<dbReference type="Pfam" id="PF00342">
    <property type="entry name" value="PGI"/>
    <property type="match status" value="1"/>
</dbReference>
<dbReference type="PRINTS" id="PR00662">
    <property type="entry name" value="G6PISOMERASE"/>
</dbReference>
<dbReference type="SUPFAM" id="SSF53697">
    <property type="entry name" value="SIS domain"/>
    <property type="match status" value="1"/>
</dbReference>
<dbReference type="PROSITE" id="PS00765">
    <property type="entry name" value="P_GLUCOSE_ISOMERASE_1"/>
    <property type="match status" value="1"/>
</dbReference>
<dbReference type="PROSITE" id="PS00174">
    <property type="entry name" value="P_GLUCOSE_ISOMERASE_2"/>
    <property type="match status" value="1"/>
</dbReference>
<dbReference type="PROSITE" id="PS51463">
    <property type="entry name" value="P_GLUCOSE_ISOMERASE_3"/>
    <property type="match status" value="1"/>
</dbReference>
<organism>
    <name type="scientific">Salmonella enteritidis PT4 (strain P125109)</name>
    <dbReference type="NCBI Taxonomy" id="550537"/>
    <lineage>
        <taxon>Bacteria</taxon>
        <taxon>Pseudomonadati</taxon>
        <taxon>Pseudomonadota</taxon>
        <taxon>Gammaproteobacteria</taxon>
        <taxon>Enterobacterales</taxon>
        <taxon>Enterobacteriaceae</taxon>
        <taxon>Salmonella</taxon>
    </lineage>
</organism>
<protein>
    <recommendedName>
        <fullName evidence="1">Glucose-6-phosphate isomerase</fullName>
        <shortName evidence="1">GPI</shortName>
        <ecNumber evidence="1">5.3.1.9</ecNumber>
    </recommendedName>
    <alternativeName>
        <fullName evidence="1">Phosphoglucose isomerase</fullName>
        <shortName evidence="1">PGI</shortName>
    </alternativeName>
    <alternativeName>
        <fullName evidence="1">Phosphohexose isomerase</fullName>
        <shortName evidence="1">PHI</shortName>
    </alternativeName>
</protein>
<gene>
    <name evidence="1" type="primary">pgi</name>
    <name type="ordered locus">SEN3987</name>
</gene>
<sequence>MKNINPTQTSAWQALQKHYDEMKDVTIAELFANDSDRFAKFSATFDDLMLVDFSKNRITEETLAKLQDLAKETDLAGAIKSMFSGEKINRTEDRAVLHVALRNRSNTPIIVDGKDVMPEVNAVLEKMKTFSQAIISGQWKGYTGKAITDVVNIGIGGSDLGPFMVTEALRPYKNHLTMHFVSNVDGTHIAEVLKKVNPETTLFLVASKTFTTQETMTNAHSARDWFLKTAGDEKHVAKHFAALSTNAKAVGEFGIDTANMFEFWDWVGGRYSLWSAIGLSIILSVGFDNFVELLSGAHAMDKHFSTTPAEKNLPILLALIGIWYNNFFGAETEAILPYDQYMHRFAAYFQQGNMESNGKYVDRNGNAVDYQTGPIIWGEPGTNGQHAFYQLIHQGTKMVPCDFIAPAITHNPLSDHHQKLLSNFFAQTEALAFGKSREVVEQEYRDQGKDPAQLEHVVPFKVFEGNRPTNSILLREITPFSLGALIALYEHKIFTQGAILNIFTFDQWGVELGKQLANRILPELGDDKAISSHDSSTNGLINRYKAWRA</sequence>
<reference key="1">
    <citation type="journal article" date="2008" name="Genome Res.">
        <title>Comparative genome analysis of Salmonella enteritidis PT4 and Salmonella gallinarum 287/91 provides insights into evolutionary and host adaptation pathways.</title>
        <authorList>
            <person name="Thomson N.R."/>
            <person name="Clayton D.J."/>
            <person name="Windhorst D."/>
            <person name="Vernikos G."/>
            <person name="Davidson S."/>
            <person name="Churcher C."/>
            <person name="Quail M.A."/>
            <person name="Stevens M."/>
            <person name="Jones M.A."/>
            <person name="Watson M."/>
            <person name="Barron A."/>
            <person name="Layton A."/>
            <person name="Pickard D."/>
            <person name="Kingsley R.A."/>
            <person name="Bignell A."/>
            <person name="Clark L."/>
            <person name="Harris B."/>
            <person name="Ormond D."/>
            <person name="Abdellah Z."/>
            <person name="Brooks K."/>
            <person name="Cherevach I."/>
            <person name="Chillingworth T."/>
            <person name="Woodward J."/>
            <person name="Norberczak H."/>
            <person name="Lord A."/>
            <person name="Arrowsmith C."/>
            <person name="Jagels K."/>
            <person name="Moule S."/>
            <person name="Mungall K."/>
            <person name="Saunders M."/>
            <person name="Whitehead S."/>
            <person name="Chabalgoity J.A."/>
            <person name="Maskell D."/>
            <person name="Humphreys T."/>
            <person name="Roberts M."/>
            <person name="Barrow P.A."/>
            <person name="Dougan G."/>
            <person name="Parkhill J."/>
        </authorList>
    </citation>
    <scope>NUCLEOTIDE SEQUENCE [LARGE SCALE GENOMIC DNA]</scope>
    <source>
        <strain>P125109</strain>
    </source>
</reference>
<comment type="function">
    <text evidence="1">Catalyzes the reversible isomerization of glucose-6-phosphate to fructose-6-phosphate.</text>
</comment>
<comment type="catalytic activity">
    <reaction evidence="1">
        <text>alpha-D-glucose 6-phosphate = beta-D-fructose 6-phosphate</text>
        <dbReference type="Rhea" id="RHEA:11816"/>
        <dbReference type="ChEBI" id="CHEBI:57634"/>
        <dbReference type="ChEBI" id="CHEBI:58225"/>
        <dbReference type="EC" id="5.3.1.9"/>
    </reaction>
</comment>
<comment type="pathway">
    <text evidence="1">Carbohydrate biosynthesis; gluconeogenesis.</text>
</comment>
<comment type="pathway">
    <text evidence="1">Carbohydrate degradation; glycolysis; D-glyceraldehyde 3-phosphate and glycerone phosphate from D-glucose: step 2/4.</text>
</comment>
<comment type="subcellular location">
    <subcellularLocation>
        <location evidence="1">Cytoplasm</location>
    </subcellularLocation>
</comment>
<comment type="similarity">
    <text evidence="1">Belongs to the GPI family.</text>
</comment>
<name>G6PI_SALEP</name>